<reference key="1">
    <citation type="journal article" date="2013" name="Genome Announc.">
        <title>Draft Genome Sequence of Indibacter alkaliphilus Strain LW1T, Isolated from Lonar Lake, a Haloalkaline Lake in the Buldana District of Maharashtra, India.</title>
        <authorList>
            <person name="Singh A."/>
            <person name="Kumar Jangir P."/>
            <person name="Sharma R."/>
            <person name="Singh A."/>
            <person name="Kumar Pinnaka A."/>
            <person name="Shivaji S."/>
        </authorList>
    </citation>
    <scope>NUCLEOTIDE SEQUENCE [LARGE SCALE GENOMIC DNA]</scope>
    <source>
        <strain>CCUG 57479 / KCTC 22604 / LW1</strain>
    </source>
</reference>
<reference key="2">
    <citation type="journal article" date="2021" name="PLoS Comput. Biol.">
        <title>Experimental and computational investigation of enzyme functional annotations uncovers misannotation in the EC 1.1.3.15 enzyme class.</title>
        <authorList>
            <person name="Rembeza E."/>
            <person name="Engqvist M.K.M."/>
        </authorList>
    </citation>
    <scope>FUNCTION</scope>
    <scope>CATALYTIC ACTIVITY</scope>
    <scope>BIOPHYSICOCHEMICAL PROPERTIES</scope>
</reference>
<feature type="chain" id="PRO_0000454862" description="L-2-hydroxyglutarate dehydrogenase">
    <location>
        <begin position="1"/>
        <end position="399"/>
    </location>
</feature>
<gene>
    <name evidence="5" type="ORF">A33Q_0852</name>
</gene>
<keyword id="KW-0274">FAD</keyword>
<keyword id="KW-0285">Flavoprotein</keyword>
<keyword id="KW-0560">Oxidoreductase</keyword>
<keyword id="KW-1185">Reference proteome</keyword>
<protein>
    <recommendedName>
        <fullName evidence="4">L-2-hydroxyglutarate dehydrogenase</fullName>
        <ecNumber evidence="2">1.1.99.2</ecNumber>
    </recommendedName>
</protein>
<sequence>MDFQVIIIGGGIVGLATGLKIKQRNPNIKVALLEKEEEVAKHQTGNNSGVIHSGLYYKPGSLKAKNCIEGYHELVRFCEEENIPFELTGKVVVATRKEQVPLLNSLLERGLQNGLKGTRSITLDELKHFEPYCAGVAAIHVPQTGIVDYKLVAEKYAEKFQILGGQVFLGHKVIKVETQNTASIIHTSKGSFSTNLLINCAGLYSDKVAQMNQKESLDVKIIPFRGEYYKIKKEREYLVKNLIYPVPDPNFPFLGVHFTRMMKGGVEAGPNAVLAFKREGYKKSQVNFSELAETLSWPGFQKVASKYWKTGMGELFRSFSKKAFTDALKELIPDIQESDLIEGGAGVRAQACDRTGGLLDDFCIREDQNAIHVLNAPSPAATSSLSIGGTVCEWALKRF</sequence>
<accession>S2DJ52</accession>
<proteinExistence type="evidence at protein level"/>
<dbReference type="EC" id="1.1.99.2" evidence="2"/>
<dbReference type="EMBL" id="ALWO02000020">
    <property type="protein sequence ID" value="EOZ98997.1"/>
    <property type="molecule type" value="Genomic_DNA"/>
</dbReference>
<dbReference type="RefSeq" id="WP_009036253.1">
    <property type="nucleotide sequence ID" value="NZ_ALWO02000020.1"/>
</dbReference>
<dbReference type="SMR" id="S2DJ52"/>
<dbReference type="STRING" id="1189612.A33Q_0852"/>
<dbReference type="eggNOG" id="COG0579">
    <property type="taxonomic scope" value="Bacteria"/>
</dbReference>
<dbReference type="OrthoDB" id="9801699at2"/>
<dbReference type="STRENDA-DB" id="GNICYO">
    <property type="experiment" value="Characterisation of L-2-hydroxyglutarate dehydrogenase"/>
</dbReference>
<dbReference type="Proteomes" id="UP000006073">
    <property type="component" value="Unassembled WGS sequence"/>
</dbReference>
<dbReference type="GO" id="GO:0005737">
    <property type="term" value="C:cytoplasm"/>
    <property type="evidence" value="ECO:0007669"/>
    <property type="project" value="TreeGrafter"/>
</dbReference>
<dbReference type="GO" id="GO:0003973">
    <property type="term" value="F:(S)-2-hydroxy-acid oxidase activity"/>
    <property type="evidence" value="ECO:0007669"/>
    <property type="project" value="UniProtKB-EC"/>
</dbReference>
<dbReference type="GO" id="GO:0047545">
    <property type="term" value="F:2-hydroxyglutarate dehydrogenase activity"/>
    <property type="evidence" value="ECO:0007669"/>
    <property type="project" value="RHEA"/>
</dbReference>
<dbReference type="Gene3D" id="3.30.9.10">
    <property type="entry name" value="D-Amino Acid Oxidase, subunit A, domain 2"/>
    <property type="match status" value="1"/>
</dbReference>
<dbReference type="Gene3D" id="3.50.50.60">
    <property type="entry name" value="FAD/NAD(P)-binding domain"/>
    <property type="match status" value="1"/>
</dbReference>
<dbReference type="InterPro" id="IPR006076">
    <property type="entry name" value="FAD-dep_OxRdtase"/>
</dbReference>
<dbReference type="InterPro" id="IPR036188">
    <property type="entry name" value="FAD/NAD-bd_sf"/>
</dbReference>
<dbReference type="NCBIfam" id="NF008726">
    <property type="entry name" value="PRK11728.1"/>
    <property type="match status" value="1"/>
</dbReference>
<dbReference type="PANTHER" id="PTHR43104">
    <property type="entry name" value="L-2-HYDROXYGLUTARATE DEHYDROGENASE, MITOCHONDRIAL"/>
    <property type="match status" value="1"/>
</dbReference>
<dbReference type="PANTHER" id="PTHR43104:SF2">
    <property type="entry name" value="L-2-HYDROXYGLUTARATE DEHYDROGENASE, MITOCHONDRIAL"/>
    <property type="match status" value="1"/>
</dbReference>
<dbReference type="Pfam" id="PF01266">
    <property type="entry name" value="DAO"/>
    <property type="match status" value="1"/>
</dbReference>
<dbReference type="SUPFAM" id="SSF51905">
    <property type="entry name" value="FAD/NAD(P)-binding domain"/>
    <property type="match status" value="1"/>
</dbReference>
<organism>
    <name type="scientific">Indibacter alkaliphilus (strain CCUG 57479 / KCTC 22604 / LW1)</name>
    <dbReference type="NCBI Taxonomy" id="1189612"/>
    <lineage>
        <taxon>Bacteria</taxon>
        <taxon>Pseudomonadati</taxon>
        <taxon>Bacteroidota</taxon>
        <taxon>Cytophagia</taxon>
        <taxon>Cytophagales</taxon>
        <taxon>Cyclobacteriaceae</taxon>
    </lineage>
</organism>
<evidence type="ECO:0000250" key="1">
    <source>
        <dbReference type="UniProtKB" id="Q9H9P8"/>
    </source>
</evidence>
<evidence type="ECO:0000269" key="2">
    <source>
    </source>
</evidence>
<evidence type="ECO:0000305" key="3"/>
<evidence type="ECO:0000305" key="4">
    <source>
    </source>
</evidence>
<evidence type="ECO:0000312" key="5">
    <source>
        <dbReference type="EMBL" id="EOZ98997.1"/>
    </source>
</evidence>
<comment type="function">
    <text evidence="2">Catalyzes the dehydrogenation of L-2-hydroxyglutarate (L2HG or(S)-2-hydroxyglutarate) to 2-oxoglutarate (alpha-ketoglutarate). Active in vitro with the artificial electron acceptor 2,6-dichlorophenolindophenol (DCPIP). Also displays a very low oxidase activity in vitro on L-2-hydroxyglutarate with O2 as the electron acceptor, but this activity is most likely not physiological.</text>
</comment>
<comment type="catalytic activity">
    <reaction evidence="2">
        <text>(S)-2-hydroxyglutarate + A = 2-oxoglutarate + AH2</text>
        <dbReference type="Rhea" id="RHEA:21252"/>
        <dbReference type="ChEBI" id="CHEBI:13193"/>
        <dbReference type="ChEBI" id="CHEBI:16782"/>
        <dbReference type="ChEBI" id="CHEBI:16810"/>
        <dbReference type="ChEBI" id="CHEBI:17499"/>
        <dbReference type="EC" id="1.1.99.2"/>
    </reaction>
</comment>
<comment type="cofactor">
    <cofactor evidence="1">
        <name>FAD</name>
        <dbReference type="ChEBI" id="CHEBI:57692"/>
    </cofactor>
</comment>
<comment type="biophysicochemical properties">
    <kinetics>
        <KM evidence="2">0.22 mM for (S)-2-hydroxyglutarate (at pH 7.4 and 25 degrees Celsius)</KM>
        <text evidence="2">kcat is 3.7 sec(-1) with DCPIP as electron acceptor (at pH 7.4 and 25 degrees Celsius).</text>
    </kinetics>
</comment>
<comment type="similarity">
    <text evidence="3">Belongs to the L2HGDH family.</text>
</comment>
<name>L2HDH_INDAL</name>